<sequence>MEERLSTTSSYPSHPGRSVEEDHNTLLASSSISSIIRGTRGHLNNFIESVGNWLVPSSSGRDDDAVSLDSCQSVYSPVRHHINSGTGGGILMEPSSIHVPENYYSVTIGEAQMVVLKRYQNLRLIGSGAQGIVCSAFDTVRNEQVAIKKLSRPFQNVTHAKRAYRELKLMSLVNHKNIIGILNCFTPQKKLDEFNDLYIVMELMDANLCQVIQMDLDHERLSYLLYQMLCGIRHLHSAGIIHRDLKPSNIVVRSDCTLKILDFGLARTAIEAFMMTPYVVTRYYRAPEVILGMGYKENVDVWSIGCIFGELIRGRVLFPGGDHIDQWTRIIEQLGTPDRSFLERLQPTVRNYVENRPRYQATPFEVLFSDNMFPMTADSSRLTGAQARDLLSRMLVIDPERRISVDDALRHPYVNVWFDEIEVYAPPPLPYDHNMDVEQNVDSWREHIFRELTDYARTHDIYS</sequence>
<gene>
    <name type="primary">jnk-1</name>
    <name type="ORF">B0478.1</name>
</gene>
<comment type="function">
    <text evidence="4 5 6 8 9 10 11 12">Serine/threonine-protein kinase which responds to activation by environmental stress by phosphorylating a number of transcription factors such as daf-16, and thus regulates transcriptional activity. By phosphorylating daf-16, plays a role in daf-16 nuclear translocation in intestinal cells in response to environmental stresses such as heat and oxidative stresses (PubMed:17894411). Downstream of jkk-1, may coordinate locomotion via type-D GABAergic motoneurons and regulates synaptic vesicle transport in conjunction with unc-16. Independently of jkk-1, may regulate some mechanosensory responses, such as response to touch (PubMed:11566876). Independently of jkk-1 and downstream of mek-1, plays a role in resistance to heavy metals, such as Cu(2+) or Cd(2+) (PubMed:11566876). Regulates germline cell apoptosis in response to heavy metals such as Cu(2+) and arsenite (PubMed:18597494, PubMed:19497412). Required for dopaminergic CEP neuron degeneration in response to Mn(2+) (PubMed:23721876). Required for normal sleep bout quantity and arousal thresholds during the transition from the last larval stage to adulthood in well-fed animals (PubMed:29523076). Downstream of jkk-1 but independently of mek-1, positively regulates lifespan (PubMed:15767565).</text>
</comment>
<comment type="catalytic activity">
    <reaction evidence="4 5 6 7">
        <text>L-seryl-[protein] + ATP = O-phospho-L-seryl-[protein] + ADP + H(+)</text>
        <dbReference type="Rhea" id="RHEA:17989"/>
        <dbReference type="Rhea" id="RHEA-COMP:9863"/>
        <dbReference type="Rhea" id="RHEA-COMP:11604"/>
        <dbReference type="ChEBI" id="CHEBI:15378"/>
        <dbReference type="ChEBI" id="CHEBI:29999"/>
        <dbReference type="ChEBI" id="CHEBI:30616"/>
        <dbReference type="ChEBI" id="CHEBI:83421"/>
        <dbReference type="ChEBI" id="CHEBI:456216"/>
        <dbReference type="EC" id="2.7.11.24"/>
    </reaction>
</comment>
<comment type="catalytic activity">
    <reaction evidence="4 5 6 7">
        <text>L-threonyl-[protein] + ATP = O-phospho-L-threonyl-[protein] + ADP + H(+)</text>
        <dbReference type="Rhea" id="RHEA:46608"/>
        <dbReference type="Rhea" id="RHEA-COMP:11060"/>
        <dbReference type="Rhea" id="RHEA-COMP:11605"/>
        <dbReference type="ChEBI" id="CHEBI:15378"/>
        <dbReference type="ChEBI" id="CHEBI:30013"/>
        <dbReference type="ChEBI" id="CHEBI:30616"/>
        <dbReference type="ChEBI" id="CHEBI:61977"/>
        <dbReference type="ChEBI" id="CHEBI:456216"/>
        <dbReference type="EC" id="2.7.11.24"/>
    </reaction>
</comment>
<comment type="cofactor">
    <cofactor evidence="4 5 6 7">
        <name>Mg(2+)</name>
        <dbReference type="ChEBI" id="CHEBI:18420"/>
    </cofactor>
</comment>
<comment type="activity regulation">
    <text evidence="4 5 6">Activated by threonine and tyrosine phosphorylation by either of the dual specificity kinases, jkk-1 and mek-1.</text>
</comment>
<comment type="subunit">
    <text evidence="6 7">Binds to the scaffolding protein, unc-16. Unc-16 also binds other components of the JNK signaling pathway (PubMed:11738026). Interacts with daf-16 (PubMed:15767565).</text>
</comment>
<comment type="interaction">
    <interactant intactId="EBI-321822">
        <id>Q8WQG9</id>
    </interactant>
    <interactant intactId="EBI-852823">
        <id>P05412</id>
        <label>JUN</label>
    </interactant>
    <organismsDiffer>true</organismsDiffer>
    <experiments>3</experiments>
</comment>
<comment type="subcellular location">
    <subcellularLocation>
        <location evidence="4">Cytoplasm</location>
    </subcellularLocation>
    <subcellularLocation>
        <location evidence="4">Perikaryon</location>
    </subcellularLocation>
    <subcellularLocation>
        <location evidence="4">Cell projection</location>
        <location evidence="4">Axon</location>
    </subcellularLocation>
</comment>
<comment type="alternative products">
    <event type="alternative splicing"/>
    <isoform>
        <id>Q8WQG9-1</id>
        <name>a</name>
        <sequence type="displayed"/>
    </isoform>
    <isoform>
        <id>Q8WQG9-2</id>
        <name>b</name>
        <sequence type="described" ref="VSP_050269"/>
    </isoform>
</comment>
<comment type="tissue specificity">
    <text evidence="4 8">Expressed in most neurons, including nerve ring, head ganglions, dorsal and ventral nerve cords and tail ganglions (PubMed:10393177). The Thr-276/Tyr-278 phosphorylated form is present in the nerve ring upon heat exposure (PubMed:17894411).</text>
</comment>
<comment type="developmental stage">
    <text evidence="5">Isoform a and isoform b are expressed in embryo and in all larval stages.</text>
</comment>
<comment type="domain">
    <text evidence="14 15">The TXY motif contains the threonine and tyrosine residues whose phosphorylation activates the MAP kinases.</text>
</comment>
<comment type="PTM">
    <text evidence="14 15">Dually phosphorylated on Thr-276 and Tyr-278, which activates the enzyme.</text>
</comment>
<comment type="disruption phenotype">
    <text evidence="11 12">RNAi-mediated knockdown prevents Mn(2+)-induced dopaminergic CEP neuron degeneration (PubMed:23721876). RNAi-mediated knockdown targeted to neurons results in increased total time in sleep bouts (PubMed:29523076).</text>
</comment>
<comment type="similarity">
    <text evidence="13">Belongs to the protein kinase superfamily. CMGC Ser/Thr protein kinase family. MAP kinase subfamily.</text>
</comment>
<reference key="1">
    <citation type="journal article" date="1999" name="EMBO J.">
        <title>A Caenorhabditis elegans JNK signal transduction pathway regulates coordinated movement via type-D GABAergic motor neurons.</title>
        <authorList>
            <person name="Kawasaki M."/>
            <person name="Hisamoto N."/>
            <person name="Iino Y."/>
            <person name="Yamamoto M."/>
            <person name="Ninomiya-Tsuji J."/>
            <person name="Matsumoto K."/>
        </authorList>
    </citation>
    <scope>NUCLEOTIDE SEQUENCE [MRNA] (ISOFORM A)</scope>
    <scope>FUNCTION</scope>
    <scope>CATALYTIC ACTIVITY</scope>
    <scope>COFACTOR</scope>
    <scope>ACTIVITY REGULATION</scope>
    <scope>SUBCELLULAR LOCATION</scope>
    <scope>TISSUE SPECIFICITY</scope>
</reference>
<reference key="2">
    <citation type="journal article" date="2001" name="EMBO J.">
        <title>jkk-1 and mek-1 regulate body movement coordination and response to heavy metals through jnk-1 in Caenorhabditis elegans.</title>
        <authorList>
            <person name="Villanueva A."/>
            <person name="Lozano J."/>
            <person name="Morales A."/>
            <person name="Lin X."/>
            <person name="Deng X."/>
            <person name="Hengartner M.O."/>
            <person name="Kolesnick R.N."/>
        </authorList>
    </citation>
    <scope>NUCLEOTIDE SEQUENCE [MRNA] (ISOFORMS A AND B)</scope>
    <scope>FUNCTION</scope>
    <scope>CATALYTIC ACTIVITY</scope>
    <scope>COFACTOR</scope>
    <scope>ACTIVITY REGULATION</scope>
    <scope>PHOSPHORYLATION AT THR-276 AND TYR-278</scope>
    <scope>MUTAGENESIS OF THR-276 AND TYR-278</scope>
</reference>
<reference key="3">
    <citation type="journal article" date="1998" name="Science">
        <title>Genome sequence of the nematode C. elegans: a platform for investigating biology.</title>
        <authorList>
            <consortium name="The C. elegans sequencing consortium"/>
        </authorList>
    </citation>
    <scope>NUCLEOTIDE SEQUENCE [LARGE SCALE GENOMIC DNA]</scope>
    <scope>ALTERNATIVE SPLICING</scope>
    <source>
        <strain>Bristol N2</strain>
    </source>
</reference>
<reference key="4">
    <citation type="journal article" date="2001" name="Neuron">
        <title>UNC-16, a JNK-signaling scaffold protein, regulates vesicle transport in C. elegans.</title>
        <authorList>
            <person name="Byrd D.T."/>
            <person name="Kawasaki M."/>
            <person name="Walcoff M."/>
            <person name="Hisamoto N."/>
            <person name="Matsumoto K."/>
            <person name="Jin Y."/>
        </authorList>
    </citation>
    <scope>FUNCTION</scope>
    <scope>CATALYTIC ACTIVITY</scope>
    <scope>COFACTOR</scope>
    <scope>INTERACTION WITH UNC-16</scope>
</reference>
<reference key="5">
    <citation type="journal article" date="2005" name="Proc. Natl. Acad. Sci. U.S.A.">
        <title>JNK regulates lifespan in Caenorhabditis elegans by modulating nuclear translocation of forkhead transcription factor/DAF-16.</title>
        <authorList>
            <person name="Oh S.W."/>
            <person name="Mukhopadhyay A."/>
            <person name="Svrzikapa N."/>
            <person name="Jiang F."/>
            <person name="Davis R.J."/>
            <person name="Tissenbaum H.A."/>
        </authorList>
    </citation>
    <scope>FUNCTION</scope>
    <scope>CATALYTIC ACTIVITY</scope>
    <scope>COFACTOR</scope>
    <scope>INTERACTION WITH DAF-16</scope>
    <scope>PHOSPHORYLATION AT THR-276 AND TYR-278</scope>
    <scope>MUTAGENESIS OF THR-276 AND TYR-278</scope>
</reference>
<reference key="6">
    <citation type="journal article" date="2008" name="Chem. Res. Toxicol.">
        <title>Arsenite-induced germline apoptosis through a MAPK-dependent, p53-independent pathway in Caenorhabditis elegans.</title>
        <authorList>
            <person name="Pei B."/>
            <person name="Wang S."/>
            <person name="Guo X."/>
            <person name="Wang J."/>
            <person name="Yang G."/>
            <person name="Hang H."/>
            <person name="Wu L."/>
        </authorList>
    </citation>
    <scope>FUNCTION</scope>
</reference>
<reference key="7">
    <citation type="journal article" date="2008" name="J. Cell. Physiol.">
        <title>The MAP kinase JNK-1 of Caenorhabditis elegans: location, activation, and influences over temperature-dependent insulin-like signaling, stress responses, and fitness.</title>
        <authorList>
            <person name="Wolf M."/>
            <person name="Nunes F."/>
            <person name="Henkel A."/>
            <person name="Heinick A."/>
            <person name="Paul R.J."/>
        </authorList>
    </citation>
    <scope>FUNCTION</scope>
    <scope>TISSUE SPECIFICITY</scope>
    <scope>PHOSPHORYLATION AT THR-276 AND TYR-278</scope>
</reference>
<reference key="8">
    <citation type="journal article" date="2009" name="Chem. Biol. Interact.">
        <title>Copper-induced germline apoptosis in Caenorhabditis elegans: the independent roles of DNA damage response signaling and the dependent roles of MAPK cascades.</title>
        <authorList>
            <person name="Wang S."/>
            <person name="Wu L."/>
            <person name="Wang Y."/>
            <person name="Luo X."/>
            <person name="Lu Y."/>
        </authorList>
    </citation>
    <scope>FUNCTION</scope>
</reference>
<reference key="9">
    <citation type="journal article" date="2013" name="NeuroToxicology">
        <title>The Nrf2/SKN-1-dependent glutathione S-transferase pi homologue GST-1 inhibits dopamine neuron degeneration in a Caenorhabditis elegans model of manganism.</title>
        <authorList>
            <person name="Settivari R."/>
            <person name="VanDuyn N."/>
            <person name="LeVora J."/>
            <person name="Nass R."/>
        </authorList>
    </citation>
    <scope>FUNCTION</scope>
    <scope>DISRUPTION PHENOTYPE</scope>
</reference>
<reference key="10">
    <citation type="journal article" date="2018" name="BMC Neurosci.">
        <title>Normal sleep bouts are not essential for C. elegans survival and FoxO is important for compensatory changes in sleep.</title>
        <authorList>
            <person name="Bennett H.L."/>
            <person name="Khoruzhik Y."/>
            <person name="Hayden D."/>
            <person name="Huang H."/>
            <person name="Sanders J."/>
            <person name="Walsh M.B."/>
            <person name="Biron D."/>
            <person name="Hart A.C."/>
        </authorList>
    </citation>
    <scope>FUNCTION</scope>
    <scope>DISRUPTION PHENOTYPE</scope>
</reference>
<evidence type="ECO:0000255" key="1">
    <source>
        <dbReference type="PROSITE-ProRule" id="PRU00159"/>
    </source>
</evidence>
<evidence type="ECO:0000255" key="2">
    <source>
        <dbReference type="PROSITE-ProRule" id="PRU10027"/>
    </source>
</evidence>
<evidence type="ECO:0000256" key="3">
    <source>
        <dbReference type="SAM" id="MobiDB-lite"/>
    </source>
</evidence>
<evidence type="ECO:0000269" key="4">
    <source>
    </source>
</evidence>
<evidence type="ECO:0000269" key="5">
    <source>
    </source>
</evidence>
<evidence type="ECO:0000269" key="6">
    <source>
    </source>
</evidence>
<evidence type="ECO:0000269" key="7">
    <source>
    </source>
</evidence>
<evidence type="ECO:0000269" key="8">
    <source>
    </source>
</evidence>
<evidence type="ECO:0000269" key="9">
    <source>
    </source>
</evidence>
<evidence type="ECO:0000269" key="10">
    <source>
    </source>
</evidence>
<evidence type="ECO:0000269" key="11">
    <source>
    </source>
</evidence>
<evidence type="ECO:0000269" key="12">
    <source>
    </source>
</evidence>
<evidence type="ECO:0000305" key="13"/>
<evidence type="ECO:0000305" key="14">
    <source>
    </source>
</evidence>
<evidence type="ECO:0000305" key="15">
    <source>
    </source>
</evidence>
<accession>Q8WQG9</accession>
<accession>Q17507</accession>
<accession>Q9UAH2</accession>
<dbReference type="EC" id="2.7.11.24" evidence="4 5 6 7"/>
<dbReference type="EMBL" id="AB024085">
    <property type="protein sequence ID" value="BAA82640.1"/>
    <property type="molecule type" value="mRNA"/>
</dbReference>
<dbReference type="EMBL" id="FO080209">
    <property type="protein sequence ID" value="CCD62004.1"/>
    <property type="molecule type" value="Genomic_DNA"/>
</dbReference>
<dbReference type="EMBL" id="FO080209">
    <property type="protein sequence ID" value="CCD62005.1"/>
    <property type="molecule type" value="Genomic_DNA"/>
</dbReference>
<dbReference type="PIR" id="T30031">
    <property type="entry name" value="T30031"/>
</dbReference>
<dbReference type="PIR" id="T37323">
    <property type="entry name" value="T37323"/>
</dbReference>
<dbReference type="RefSeq" id="NP_001021270.1">
    <molecule id="Q8WQG9-1"/>
    <property type="nucleotide sequence ID" value="NM_001026099.6"/>
</dbReference>
<dbReference type="RefSeq" id="NP_001379581.1">
    <molecule id="Q8WQG9-2"/>
    <property type="nucleotide sequence ID" value="NM_001392324.1"/>
</dbReference>
<dbReference type="RefSeq" id="NP_741434.2">
    <property type="nucleotide sequence ID" value="NM_171371.4"/>
</dbReference>
<dbReference type="SMR" id="Q8WQG9"/>
<dbReference type="BioGRID" id="42580">
    <property type="interactions" value="7"/>
</dbReference>
<dbReference type="DIP" id="DIP-26951N"/>
<dbReference type="FunCoup" id="Q8WQG9">
    <property type="interactions" value="2532"/>
</dbReference>
<dbReference type="IntAct" id="Q8WQG9">
    <property type="interactions" value="4"/>
</dbReference>
<dbReference type="STRING" id="6239.B0478.1a.1"/>
<dbReference type="iPTMnet" id="Q8WQG9"/>
<dbReference type="PaxDb" id="6239-B0478.1a"/>
<dbReference type="PeptideAtlas" id="Q8WQG9"/>
<dbReference type="EnsemblMetazoa" id="B0478.1a.1">
    <molecule id="Q8WQG9-1"/>
    <property type="protein sequence ID" value="B0478.1a.1"/>
    <property type="gene ID" value="WBGene00002178"/>
</dbReference>
<dbReference type="EnsemblMetazoa" id="B0478.1b.1">
    <molecule id="Q8WQG9-2"/>
    <property type="protein sequence ID" value="B0478.1b.1"/>
    <property type="gene ID" value="WBGene00002178"/>
</dbReference>
<dbReference type="GeneID" id="177460"/>
<dbReference type="KEGG" id="cel:CELE_B0478.1"/>
<dbReference type="UCSC" id="B0478.1a">
    <molecule id="Q8WQG9-1"/>
    <property type="organism name" value="c. elegans"/>
</dbReference>
<dbReference type="AGR" id="WB:WBGene00002178"/>
<dbReference type="CTD" id="177460"/>
<dbReference type="WormBase" id="B0478.1a">
    <molecule id="Q8WQG9-1"/>
    <property type="protein sequence ID" value="CE27574"/>
    <property type="gene ID" value="WBGene00002178"/>
    <property type="gene designation" value="jnk-1"/>
</dbReference>
<dbReference type="WormBase" id="B0478.1b">
    <molecule id="Q8WQG9-2"/>
    <property type="protein sequence ID" value="CE30123"/>
    <property type="gene ID" value="WBGene00002178"/>
    <property type="gene designation" value="jnk-1"/>
</dbReference>
<dbReference type="eggNOG" id="KOG0665">
    <property type="taxonomic scope" value="Eukaryota"/>
</dbReference>
<dbReference type="GeneTree" id="ENSGT00940000169409"/>
<dbReference type="InParanoid" id="Q8WQG9"/>
<dbReference type="OMA" id="QGHAFES"/>
<dbReference type="OrthoDB" id="192887at2759"/>
<dbReference type="PhylomeDB" id="Q8WQG9"/>
<dbReference type="BRENDA" id="2.7.11.24">
    <property type="organism ID" value="1045"/>
</dbReference>
<dbReference type="Reactome" id="R-CEL-193648">
    <property type="pathway name" value="NRAGE signals death through JNK"/>
</dbReference>
<dbReference type="Reactome" id="R-CEL-2559580">
    <property type="pathway name" value="Oxidative Stress Induced Senescence"/>
</dbReference>
<dbReference type="Reactome" id="R-CEL-2871796">
    <property type="pathway name" value="FCERI mediated MAPK activation"/>
</dbReference>
<dbReference type="Reactome" id="R-CEL-450321">
    <property type="pathway name" value="JNK (c-Jun kinases) phosphorylation and activation mediated by activated human TAK1"/>
</dbReference>
<dbReference type="Reactome" id="R-CEL-450341">
    <property type="pathway name" value="Activation of the AP-1 family of transcription factors"/>
</dbReference>
<dbReference type="Reactome" id="R-CEL-9007892">
    <property type="pathway name" value="Interleukin-38 signaling"/>
</dbReference>
<dbReference type="SignaLink" id="Q8WQG9"/>
<dbReference type="PRO" id="PR:Q8WQG9"/>
<dbReference type="Proteomes" id="UP000001940">
    <property type="component" value="Chromosome IV"/>
</dbReference>
<dbReference type="Bgee" id="WBGene00002178">
    <property type="expression patterns" value="Expressed in pharyngeal muscle cell (C elegans) and 3 other cell types or tissues"/>
</dbReference>
<dbReference type="GO" id="GO:0030424">
    <property type="term" value="C:axon"/>
    <property type="evidence" value="ECO:0000314"/>
    <property type="project" value="WormBase"/>
</dbReference>
<dbReference type="GO" id="GO:0005737">
    <property type="term" value="C:cytoplasm"/>
    <property type="evidence" value="ECO:0000314"/>
    <property type="project" value="WormBase"/>
</dbReference>
<dbReference type="GO" id="GO:0043025">
    <property type="term" value="C:neuronal cell body"/>
    <property type="evidence" value="ECO:0000314"/>
    <property type="project" value="WormBase"/>
</dbReference>
<dbReference type="GO" id="GO:0005634">
    <property type="term" value="C:nucleus"/>
    <property type="evidence" value="ECO:0000314"/>
    <property type="project" value="WormBase"/>
</dbReference>
<dbReference type="GO" id="GO:0043204">
    <property type="term" value="C:perikaryon"/>
    <property type="evidence" value="ECO:0007669"/>
    <property type="project" value="UniProtKB-SubCell"/>
</dbReference>
<dbReference type="GO" id="GO:0005524">
    <property type="term" value="F:ATP binding"/>
    <property type="evidence" value="ECO:0007669"/>
    <property type="project" value="UniProtKB-KW"/>
</dbReference>
<dbReference type="GO" id="GO:0004705">
    <property type="term" value="F:JUN kinase activity"/>
    <property type="evidence" value="ECO:0000314"/>
    <property type="project" value="WormBase"/>
</dbReference>
<dbReference type="GO" id="GO:0046872">
    <property type="term" value="F:metal ion binding"/>
    <property type="evidence" value="ECO:0007669"/>
    <property type="project" value="UniProtKB-KW"/>
</dbReference>
<dbReference type="GO" id="GO:0004672">
    <property type="term" value="F:protein kinase activity"/>
    <property type="evidence" value="ECO:0000314"/>
    <property type="project" value="WormBase"/>
</dbReference>
<dbReference type="GO" id="GO:0106310">
    <property type="term" value="F:protein serine kinase activity"/>
    <property type="evidence" value="ECO:0007669"/>
    <property type="project" value="RHEA"/>
</dbReference>
<dbReference type="GO" id="GO:0061629">
    <property type="term" value="F:RNA polymerase II-specific DNA-binding transcription factor binding"/>
    <property type="evidence" value="ECO:0000353"/>
    <property type="project" value="WormBase"/>
</dbReference>
<dbReference type="GO" id="GO:0008340">
    <property type="term" value="P:determination of adult lifespan"/>
    <property type="evidence" value="ECO:0000315"/>
    <property type="project" value="WormBase"/>
</dbReference>
<dbReference type="GO" id="GO:0006972">
    <property type="term" value="P:hyperosmotic response"/>
    <property type="evidence" value="ECO:0000316"/>
    <property type="project" value="WormBase"/>
</dbReference>
<dbReference type="GO" id="GO:0007254">
    <property type="term" value="P:JNK cascade"/>
    <property type="evidence" value="ECO:0000250"/>
    <property type="project" value="UniProtKB"/>
</dbReference>
<dbReference type="GO" id="GO:0000165">
    <property type="term" value="P:MAPK cascade"/>
    <property type="evidence" value="ECO:0000316"/>
    <property type="project" value="WormBase"/>
</dbReference>
<dbReference type="GO" id="GO:0048681">
    <property type="term" value="P:negative regulation of axon regeneration"/>
    <property type="evidence" value="ECO:0000315"/>
    <property type="project" value="WormBase"/>
</dbReference>
<dbReference type="GO" id="GO:1905803">
    <property type="term" value="P:negative regulation of cellular response to manganese ion"/>
    <property type="evidence" value="ECO:0000315"/>
    <property type="project" value="UniProtKB"/>
</dbReference>
<dbReference type="GO" id="GO:0009408">
    <property type="term" value="P:response to heat"/>
    <property type="evidence" value="ECO:0000315"/>
    <property type="project" value="WormBase"/>
</dbReference>
<dbReference type="GO" id="GO:0030431">
    <property type="term" value="P:sleep"/>
    <property type="evidence" value="ECO:0000315"/>
    <property type="project" value="UniProtKB"/>
</dbReference>
<dbReference type="GO" id="GO:0030050">
    <property type="term" value="P:vesicle transport along actin filament"/>
    <property type="evidence" value="ECO:0000314"/>
    <property type="project" value="UniProtKB"/>
</dbReference>
<dbReference type="CDD" id="cd07850">
    <property type="entry name" value="STKc_JNK"/>
    <property type="match status" value="1"/>
</dbReference>
<dbReference type="FunFam" id="1.10.510.10:FF:000009">
    <property type="entry name" value="Mitogen-activated protein kinase"/>
    <property type="match status" value="1"/>
</dbReference>
<dbReference type="FunFam" id="3.30.200.20:FF:000210">
    <property type="entry name" value="Mitogen-activated protein kinase"/>
    <property type="match status" value="1"/>
</dbReference>
<dbReference type="Gene3D" id="3.30.200.20">
    <property type="entry name" value="Phosphorylase Kinase, domain 1"/>
    <property type="match status" value="1"/>
</dbReference>
<dbReference type="Gene3D" id="1.10.510.10">
    <property type="entry name" value="Transferase(Phosphotransferase) domain 1"/>
    <property type="match status" value="1"/>
</dbReference>
<dbReference type="InterPro" id="IPR011009">
    <property type="entry name" value="Kinase-like_dom_sf"/>
</dbReference>
<dbReference type="InterPro" id="IPR050117">
    <property type="entry name" value="MAP_kinase"/>
</dbReference>
<dbReference type="InterPro" id="IPR003527">
    <property type="entry name" value="MAP_kinase_CS"/>
</dbReference>
<dbReference type="InterPro" id="IPR008351">
    <property type="entry name" value="MAPK_JNK"/>
</dbReference>
<dbReference type="InterPro" id="IPR000719">
    <property type="entry name" value="Prot_kinase_dom"/>
</dbReference>
<dbReference type="InterPro" id="IPR008271">
    <property type="entry name" value="Ser/Thr_kinase_AS"/>
</dbReference>
<dbReference type="PANTHER" id="PTHR24055">
    <property type="entry name" value="MITOGEN-ACTIVATED PROTEIN KINASE"/>
    <property type="match status" value="1"/>
</dbReference>
<dbReference type="Pfam" id="PF00069">
    <property type="entry name" value="Pkinase"/>
    <property type="match status" value="1"/>
</dbReference>
<dbReference type="PRINTS" id="PR01772">
    <property type="entry name" value="JNKMAPKINASE"/>
</dbReference>
<dbReference type="SMART" id="SM00220">
    <property type="entry name" value="S_TKc"/>
    <property type="match status" value="1"/>
</dbReference>
<dbReference type="SUPFAM" id="SSF56112">
    <property type="entry name" value="Protein kinase-like (PK-like)"/>
    <property type="match status" value="1"/>
</dbReference>
<dbReference type="PROSITE" id="PS01351">
    <property type="entry name" value="MAPK"/>
    <property type="match status" value="1"/>
</dbReference>
<dbReference type="PROSITE" id="PS50011">
    <property type="entry name" value="PROTEIN_KINASE_DOM"/>
    <property type="match status" value="1"/>
</dbReference>
<dbReference type="PROSITE" id="PS00108">
    <property type="entry name" value="PROTEIN_KINASE_ST"/>
    <property type="match status" value="1"/>
</dbReference>
<keyword id="KW-0025">Alternative splicing</keyword>
<keyword id="KW-0067">ATP-binding</keyword>
<keyword id="KW-0966">Cell projection</keyword>
<keyword id="KW-0963">Cytoplasm</keyword>
<keyword id="KW-0418">Kinase</keyword>
<keyword id="KW-0460">Magnesium</keyword>
<keyword id="KW-0479">Metal-binding</keyword>
<keyword id="KW-0547">Nucleotide-binding</keyword>
<keyword id="KW-0597">Phosphoprotein</keyword>
<keyword id="KW-1185">Reference proteome</keyword>
<keyword id="KW-0723">Serine/threonine-protein kinase</keyword>
<keyword id="KW-0808">Transferase</keyword>
<protein>
    <recommendedName>
        <fullName>Stress-activated protein kinase jnk-1</fullName>
        <ecNumber evidence="4 5 6 7">2.7.11.24</ecNumber>
    </recommendedName>
</protein>
<name>JNK1_CAEEL</name>
<proteinExistence type="evidence at protein level"/>
<feature type="chain" id="PRO_0000186270" description="Stress-activated protein kinase jnk-1">
    <location>
        <begin position="1"/>
        <end position="463"/>
    </location>
</feature>
<feature type="domain" description="Protein kinase" evidence="1">
    <location>
        <begin position="119"/>
        <end position="412"/>
    </location>
</feature>
<feature type="region of interest" description="Disordered" evidence="3">
    <location>
        <begin position="1"/>
        <end position="23"/>
    </location>
</feature>
<feature type="short sequence motif" description="TXY" evidence="13">
    <location>
        <begin position="276"/>
        <end position="278"/>
    </location>
</feature>
<feature type="compositionally biased region" description="Polar residues" evidence="3">
    <location>
        <begin position="1"/>
        <end position="12"/>
    </location>
</feature>
<feature type="active site" description="Proton acceptor" evidence="1 2">
    <location>
        <position position="244"/>
    </location>
</feature>
<feature type="binding site" evidence="1">
    <location>
        <begin position="126"/>
        <end position="131"/>
    </location>
    <ligand>
        <name>ATP</name>
        <dbReference type="ChEBI" id="CHEBI:30616"/>
    </ligand>
</feature>
<feature type="binding site" evidence="1">
    <location>
        <position position="148"/>
    </location>
    <ligand>
        <name>ATP</name>
        <dbReference type="ChEBI" id="CHEBI:30616"/>
    </ligand>
</feature>
<feature type="modified residue" description="Phosphothreonine" evidence="5 7 8">
    <location>
        <position position="276"/>
    </location>
</feature>
<feature type="modified residue" description="Phosphotyrosine" evidence="5 7 8">
    <location>
        <position position="278"/>
    </location>
</feature>
<feature type="splice variant" id="VSP_050269" description="In isoform b." evidence="13">
    <location>
        <begin position="1"/>
        <end position="91"/>
    </location>
</feature>
<feature type="mutagenesis site" description="Abolishes phosphorylation. Loss of kinase activity; when associated with F-278." evidence="5 7">
    <original>T</original>
    <variation>A</variation>
    <location>
        <position position="276"/>
    </location>
</feature>
<feature type="mutagenesis site" description="Abolishes phosphorylation. Loss of kinase activity; when associated with A-276." evidence="5 7">
    <original>Y</original>
    <variation>F</variation>
    <location>
        <position position="278"/>
    </location>
</feature>
<organism>
    <name type="scientific">Caenorhabditis elegans</name>
    <dbReference type="NCBI Taxonomy" id="6239"/>
    <lineage>
        <taxon>Eukaryota</taxon>
        <taxon>Metazoa</taxon>
        <taxon>Ecdysozoa</taxon>
        <taxon>Nematoda</taxon>
        <taxon>Chromadorea</taxon>
        <taxon>Rhabditida</taxon>
        <taxon>Rhabditina</taxon>
        <taxon>Rhabditomorpha</taxon>
        <taxon>Rhabditoidea</taxon>
        <taxon>Rhabditidae</taxon>
        <taxon>Peloderinae</taxon>
        <taxon>Caenorhabditis</taxon>
    </lineage>
</organism>